<feature type="chain" id="PRO_0000337061" description="Tectonin beta-propeller repeat-containing protein 1">
    <location>
        <begin position="1"/>
        <end position="1166"/>
    </location>
</feature>
<feature type="repeat" description="TECPR 1">
    <location>
        <begin position="209"/>
        <end position="240"/>
    </location>
</feature>
<feature type="repeat" description="TECPR 2">
    <location>
        <begin position="254"/>
        <end position="285"/>
    </location>
</feature>
<feature type="repeat" description="TECPR 3">
    <location>
        <begin position="301"/>
        <end position="332"/>
    </location>
</feature>
<feature type="repeat" description="TECPR 4">
    <location>
        <begin position="344"/>
        <end position="376"/>
    </location>
</feature>
<feature type="domain" description="PH">
    <location>
        <begin position="616"/>
        <end position="722"/>
    </location>
</feature>
<feature type="repeat" description="TECPR 5">
    <location>
        <begin position="734"/>
        <end position="761"/>
    </location>
</feature>
<feature type="repeat" description="TECPR 6">
    <location>
        <begin position="958"/>
        <end position="989"/>
    </location>
</feature>
<feature type="repeat" description="TECPR 7">
    <location>
        <begin position="1003"/>
        <end position="1034"/>
    </location>
</feature>
<feature type="repeat" description="TECPR 8">
    <location>
        <begin position="1049"/>
        <end position="1080"/>
    </location>
</feature>
<feature type="repeat" description="TECPR 9">
    <location>
        <begin position="1092"/>
        <end position="1132"/>
    </location>
</feature>
<feature type="region of interest" description="Disordered" evidence="3">
    <location>
        <begin position="404"/>
        <end position="496"/>
    </location>
</feature>
<feature type="compositionally biased region" description="Polar residues" evidence="3">
    <location>
        <begin position="407"/>
        <end position="416"/>
    </location>
</feature>
<feature type="compositionally biased region" description="Polar residues" evidence="3">
    <location>
        <begin position="451"/>
        <end position="462"/>
    </location>
</feature>
<feature type="compositionally biased region" description="Basic and acidic residues" evidence="3">
    <location>
        <begin position="466"/>
        <end position="481"/>
    </location>
</feature>
<feature type="modified residue" description="Phosphoserine" evidence="6">
    <location>
        <position position="386"/>
    </location>
</feature>
<feature type="modified residue" description="Phosphoserine" evidence="6">
    <location>
        <position position="388"/>
    </location>
</feature>
<feature type="modified residue" description="Phosphoserine" evidence="6">
    <location>
        <position position="391"/>
    </location>
</feature>
<feature type="modified residue" description="Phosphoserine" evidence="6">
    <location>
        <position position="413"/>
    </location>
</feature>
<feature type="modified residue" description="Phosphoserine" evidence="6">
    <location>
        <position position="418"/>
    </location>
</feature>
<feature type="modified residue" description="Phosphoserine" evidence="2">
    <location>
        <position position="943"/>
    </location>
</feature>
<feature type="splice variant" id="VSP_033862" description="In isoform 2." evidence="4">
    <location>
        <begin position="1"/>
        <end position="141"/>
    </location>
</feature>
<feature type="sequence conflict" description="In Ref. 1; BAC41478." evidence="5" ref="1">
    <original>R</original>
    <variation>W</variation>
    <location>
        <position position="725"/>
    </location>
</feature>
<feature type="sequence conflict" description="In Ref. 3; AAH04058." evidence="5" ref="3">
    <original>A</original>
    <variation>T</variation>
    <location>
        <position position="1014"/>
    </location>
</feature>
<feature type="sequence conflict" description="In Ref. 3; AAH04058." evidence="5" ref="3">
    <original>R</original>
    <variation>C</variation>
    <location>
        <position position="1159"/>
    </location>
</feature>
<dbReference type="EMBL" id="AB093295">
    <property type="protein sequence ID" value="BAC41478.1"/>
    <property type="status" value="ALT_INIT"/>
    <property type="molecule type" value="mRNA"/>
</dbReference>
<dbReference type="EMBL" id="AK008701">
    <property type="protein sequence ID" value="BAB25841.1"/>
    <property type="molecule type" value="mRNA"/>
</dbReference>
<dbReference type="EMBL" id="AK169888">
    <property type="protein sequence ID" value="BAE41437.1"/>
    <property type="molecule type" value="mRNA"/>
</dbReference>
<dbReference type="EMBL" id="AK170108">
    <property type="protein sequence ID" value="BAE41568.1"/>
    <property type="molecule type" value="mRNA"/>
</dbReference>
<dbReference type="EMBL" id="BC004058">
    <property type="protein sequence ID" value="AAH04058.1"/>
    <property type="molecule type" value="mRNA"/>
</dbReference>
<dbReference type="EMBL" id="BC025567">
    <property type="protein sequence ID" value="AAH25567.1"/>
    <property type="status" value="ALT_INIT"/>
    <property type="molecule type" value="mRNA"/>
</dbReference>
<dbReference type="EMBL" id="BC046968">
    <property type="protein sequence ID" value="AAH46968.1"/>
    <property type="molecule type" value="mRNA"/>
</dbReference>
<dbReference type="CCDS" id="CCDS39377.1">
    <molecule id="Q80VP0-1"/>
</dbReference>
<dbReference type="RefSeq" id="NP_081686.1">
    <molecule id="Q80VP0-1"/>
    <property type="nucleotide sequence ID" value="NM_027410.2"/>
</dbReference>
<dbReference type="SMR" id="Q80VP0"/>
<dbReference type="BioGRID" id="214015">
    <property type="interactions" value="17"/>
</dbReference>
<dbReference type="ComplexPortal" id="CPX-360">
    <property type="entry name" value="ATG5-ATG12-TECPR1 complex"/>
</dbReference>
<dbReference type="FunCoup" id="Q80VP0">
    <property type="interactions" value="1741"/>
</dbReference>
<dbReference type="STRING" id="10090.ENSMUSP00000082844"/>
<dbReference type="GlyGen" id="Q80VP0">
    <property type="glycosylation" value="8 sites, 2 N-linked glycans (2 sites), 1 O-linked glycan (4 sites)"/>
</dbReference>
<dbReference type="iPTMnet" id="Q80VP0"/>
<dbReference type="PhosphoSitePlus" id="Q80VP0"/>
<dbReference type="SwissPalm" id="Q80VP0"/>
<dbReference type="jPOST" id="Q80VP0"/>
<dbReference type="PaxDb" id="10090-ENSMUSP00000082844"/>
<dbReference type="PeptideAtlas" id="Q80VP0"/>
<dbReference type="ProteomicsDB" id="259365">
    <molecule id="Q80VP0-1"/>
</dbReference>
<dbReference type="ProteomicsDB" id="259366">
    <molecule id="Q80VP0-2"/>
</dbReference>
<dbReference type="Pumba" id="Q80VP0"/>
<dbReference type="Antibodypedia" id="8742">
    <property type="antibodies" value="123 antibodies from 21 providers"/>
</dbReference>
<dbReference type="Ensembl" id="ENSMUST00000085701.7">
    <molecule id="Q80VP0-1"/>
    <property type="protein sequence ID" value="ENSMUSP00000082844.7"/>
    <property type="gene ID" value="ENSMUSG00000066621.13"/>
</dbReference>
<dbReference type="GeneID" id="70381"/>
<dbReference type="KEGG" id="mmu:70381"/>
<dbReference type="UCSC" id="uc009alj.2">
    <molecule id="Q80VP0-1"/>
    <property type="organism name" value="mouse"/>
</dbReference>
<dbReference type="AGR" id="MGI:1917631"/>
<dbReference type="CTD" id="25851"/>
<dbReference type="MGI" id="MGI:1917631">
    <property type="gene designation" value="Tecpr1"/>
</dbReference>
<dbReference type="VEuPathDB" id="HostDB:ENSMUSG00000066621"/>
<dbReference type="eggNOG" id="KOG3669">
    <property type="taxonomic scope" value="Eukaryota"/>
</dbReference>
<dbReference type="GeneTree" id="ENSGT00510000047886"/>
<dbReference type="HOGENOM" id="CLU_008303_0_0_1"/>
<dbReference type="InParanoid" id="Q80VP0"/>
<dbReference type="OMA" id="CPMQISR"/>
<dbReference type="OrthoDB" id="72441at2759"/>
<dbReference type="PhylomeDB" id="Q80VP0"/>
<dbReference type="TreeFam" id="TF323648"/>
<dbReference type="BioGRID-ORCS" id="70381">
    <property type="hits" value="3 hits in 79 CRISPR screens"/>
</dbReference>
<dbReference type="ChiTaRS" id="Tecpr1">
    <property type="organism name" value="mouse"/>
</dbReference>
<dbReference type="PRO" id="PR:Q80VP0"/>
<dbReference type="Proteomes" id="UP000000589">
    <property type="component" value="Chromosome 5"/>
</dbReference>
<dbReference type="RNAct" id="Q80VP0">
    <property type="molecule type" value="protein"/>
</dbReference>
<dbReference type="Bgee" id="ENSMUSG00000066621">
    <property type="expression patterns" value="Expressed in lacrimal gland and 251 other cell types or tissues"/>
</dbReference>
<dbReference type="GO" id="GO:0000421">
    <property type="term" value="C:autophagosome membrane"/>
    <property type="evidence" value="ECO:0000250"/>
    <property type="project" value="UniProtKB"/>
</dbReference>
<dbReference type="GO" id="GO:0031410">
    <property type="term" value="C:cytoplasmic vesicle"/>
    <property type="evidence" value="ECO:0007669"/>
    <property type="project" value="UniProtKB-KW"/>
</dbReference>
<dbReference type="GO" id="GO:0005765">
    <property type="term" value="C:lysosomal membrane"/>
    <property type="evidence" value="ECO:0000250"/>
    <property type="project" value="UniProtKB"/>
</dbReference>
<dbReference type="GO" id="GO:0005654">
    <property type="term" value="C:nucleoplasm"/>
    <property type="evidence" value="ECO:0007669"/>
    <property type="project" value="Ensembl"/>
</dbReference>
<dbReference type="GO" id="GO:0032991">
    <property type="term" value="C:protein-containing complex"/>
    <property type="evidence" value="ECO:0000303"/>
    <property type="project" value="ComplexPortal"/>
</dbReference>
<dbReference type="GO" id="GO:0032266">
    <property type="term" value="F:phosphatidylinositol-3-phosphate binding"/>
    <property type="evidence" value="ECO:0000250"/>
    <property type="project" value="UniProtKB"/>
</dbReference>
<dbReference type="GO" id="GO:0097352">
    <property type="term" value="P:autophagosome maturation"/>
    <property type="evidence" value="ECO:0000250"/>
    <property type="project" value="UniProtKB"/>
</dbReference>
<dbReference type="GO" id="GO:0006914">
    <property type="term" value="P:autophagy"/>
    <property type="evidence" value="ECO:0000250"/>
    <property type="project" value="UniProtKB"/>
</dbReference>
<dbReference type="GO" id="GO:0016236">
    <property type="term" value="P:macroautophagy"/>
    <property type="evidence" value="ECO:0000266"/>
    <property type="project" value="ComplexPortal"/>
</dbReference>
<dbReference type="GO" id="GO:1901096">
    <property type="term" value="P:regulation of autophagosome maturation"/>
    <property type="evidence" value="ECO:0000266"/>
    <property type="project" value="ComplexPortal"/>
</dbReference>
<dbReference type="CDD" id="cd13300">
    <property type="entry name" value="PH1_TECPR1"/>
    <property type="match status" value="1"/>
</dbReference>
<dbReference type="FunFam" id="2.30.29.30:FF:000690">
    <property type="entry name" value="Tectonin beta-propeller repeat-containing protein 1"/>
    <property type="match status" value="1"/>
</dbReference>
<dbReference type="Gene3D" id="2.30.29.30">
    <property type="entry name" value="Pleckstrin-homology domain (PH domain)/Phosphotyrosine-binding domain (PTB)"/>
    <property type="match status" value="1"/>
</dbReference>
<dbReference type="InterPro" id="IPR006624">
    <property type="entry name" value="Beta-propeller_rpt_TECPR"/>
</dbReference>
<dbReference type="InterPro" id="IPR006614">
    <property type="entry name" value="Peroxin/Ferlin"/>
</dbReference>
<dbReference type="InterPro" id="IPR011993">
    <property type="entry name" value="PH-like_dom_sf"/>
</dbReference>
<dbReference type="InterPro" id="IPR010482">
    <property type="entry name" value="TECPR1-like_DysF"/>
</dbReference>
<dbReference type="InterPro" id="IPR051513">
    <property type="entry name" value="Tectonin_beta-propeller"/>
</dbReference>
<dbReference type="PANTHER" id="PTHR23250">
    <property type="entry name" value="DYSFERLIN-RELATED"/>
    <property type="match status" value="1"/>
</dbReference>
<dbReference type="PANTHER" id="PTHR23250:SF1">
    <property type="entry name" value="TECTONIN BETA-PROPELLER REPEAT-CONTAINING PROTEIN 1"/>
    <property type="match status" value="1"/>
</dbReference>
<dbReference type="Pfam" id="PF06462">
    <property type="entry name" value="Hyd_WA"/>
    <property type="match status" value="4"/>
</dbReference>
<dbReference type="Pfam" id="PF06398">
    <property type="entry name" value="Pex24p"/>
    <property type="match status" value="2"/>
</dbReference>
<dbReference type="Pfam" id="PF19193">
    <property type="entry name" value="Tectonin"/>
    <property type="match status" value="1"/>
</dbReference>
<dbReference type="SMART" id="SM00694">
    <property type="entry name" value="DysFC"/>
    <property type="match status" value="2"/>
</dbReference>
<dbReference type="SMART" id="SM00693">
    <property type="entry name" value="DysFN"/>
    <property type="match status" value="2"/>
</dbReference>
<dbReference type="SMART" id="SM00706">
    <property type="entry name" value="TECPR"/>
    <property type="match status" value="11"/>
</dbReference>
<dbReference type="SUPFAM" id="SSF50729">
    <property type="entry name" value="PH domain-like"/>
    <property type="match status" value="1"/>
</dbReference>
<protein>
    <recommendedName>
        <fullName>Tectonin beta-propeller repeat-containing protein 1</fullName>
    </recommendedName>
</protein>
<gene>
    <name type="primary">Tecpr1</name>
    <name type="synonym">Kiaa1358</name>
</gene>
<keyword id="KW-0025">Alternative splicing</keyword>
<keyword id="KW-0072">Autophagy</keyword>
<keyword id="KW-0968">Cytoplasmic vesicle</keyword>
<keyword id="KW-0446">Lipid-binding</keyword>
<keyword id="KW-0458">Lysosome</keyword>
<keyword id="KW-0472">Membrane</keyword>
<keyword id="KW-0597">Phosphoprotein</keyword>
<keyword id="KW-1185">Reference proteome</keyword>
<keyword id="KW-0677">Repeat</keyword>
<organism>
    <name type="scientific">Mus musculus</name>
    <name type="common">Mouse</name>
    <dbReference type="NCBI Taxonomy" id="10090"/>
    <lineage>
        <taxon>Eukaryota</taxon>
        <taxon>Metazoa</taxon>
        <taxon>Chordata</taxon>
        <taxon>Craniata</taxon>
        <taxon>Vertebrata</taxon>
        <taxon>Euteleostomi</taxon>
        <taxon>Mammalia</taxon>
        <taxon>Eutheria</taxon>
        <taxon>Euarchontoglires</taxon>
        <taxon>Glires</taxon>
        <taxon>Rodentia</taxon>
        <taxon>Myomorpha</taxon>
        <taxon>Muroidea</taxon>
        <taxon>Muridae</taxon>
        <taxon>Murinae</taxon>
        <taxon>Mus</taxon>
        <taxon>Mus</taxon>
    </lineage>
</organism>
<name>TCPR1_MOUSE</name>
<reference key="1">
    <citation type="journal article" date="2002" name="DNA Res.">
        <title>Prediction of the coding sequences of mouse homologues of KIAA gene: I. The complete nucleotide sequences of 100 mouse KIAA-homologous cDNAs identified by screening of terminal sequences of cDNA clones randomly sampled from size-fractionated libraries.</title>
        <authorList>
            <person name="Okazaki N."/>
            <person name="Kikuno R."/>
            <person name="Ohara R."/>
            <person name="Inamoto S."/>
            <person name="Hara Y."/>
            <person name="Nagase T."/>
            <person name="Ohara O."/>
            <person name="Koga H."/>
        </authorList>
    </citation>
    <scope>NUCLEOTIDE SEQUENCE [LARGE SCALE MRNA] (ISOFORM 2)</scope>
    <source>
        <tissue>Brain</tissue>
    </source>
</reference>
<reference key="2">
    <citation type="journal article" date="2005" name="Science">
        <title>The transcriptional landscape of the mammalian genome.</title>
        <authorList>
            <person name="Carninci P."/>
            <person name="Kasukawa T."/>
            <person name="Katayama S."/>
            <person name="Gough J."/>
            <person name="Frith M.C."/>
            <person name="Maeda N."/>
            <person name="Oyama R."/>
            <person name="Ravasi T."/>
            <person name="Lenhard B."/>
            <person name="Wells C."/>
            <person name="Kodzius R."/>
            <person name="Shimokawa K."/>
            <person name="Bajic V.B."/>
            <person name="Brenner S.E."/>
            <person name="Batalov S."/>
            <person name="Forrest A.R."/>
            <person name="Zavolan M."/>
            <person name="Davis M.J."/>
            <person name="Wilming L.G."/>
            <person name="Aidinis V."/>
            <person name="Allen J.E."/>
            <person name="Ambesi-Impiombato A."/>
            <person name="Apweiler R."/>
            <person name="Aturaliya R.N."/>
            <person name="Bailey T.L."/>
            <person name="Bansal M."/>
            <person name="Baxter L."/>
            <person name="Beisel K.W."/>
            <person name="Bersano T."/>
            <person name="Bono H."/>
            <person name="Chalk A.M."/>
            <person name="Chiu K.P."/>
            <person name="Choudhary V."/>
            <person name="Christoffels A."/>
            <person name="Clutterbuck D.R."/>
            <person name="Crowe M.L."/>
            <person name="Dalla E."/>
            <person name="Dalrymple B.P."/>
            <person name="de Bono B."/>
            <person name="Della Gatta G."/>
            <person name="di Bernardo D."/>
            <person name="Down T."/>
            <person name="Engstrom P."/>
            <person name="Fagiolini M."/>
            <person name="Faulkner G."/>
            <person name="Fletcher C.F."/>
            <person name="Fukushima T."/>
            <person name="Furuno M."/>
            <person name="Futaki S."/>
            <person name="Gariboldi M."/>
            <person name="Georgii-Hemming P."/>
            <person name="Gingeras T.R."/>
            <person name="Gojobori T."/>
            <person name="Green R.E."/>
            <person name="Gustincich S."/>
            <person name="Harbers M."/>
            <person name="Hayashi Y."/>
            <person name="Hensch T.K."/>
            <person name="Hirokawa N."/>
            <person name="Hill D."/>
            <person name="Huminiecki L."/>
            <person name="Iacono M."/>
            <person name="Ikeo K."/>
            <person name="Iwama A."/>
            <person name="Ishikawa T."/>
            <person name="Jakt M."/>
            <person name="Kanapin A."/>
            <person name="Katoh M."/>
            <person name="Kawasawa Y."/>
            <person name="Kelso J."/>
            <person name="Kitamura H."/>
            <person name="Kitano H."/>
            <person name="Kollias G."/>
            <person name="Krishnan S.P."/>
            <person name="Kruger A."/>
            <person name="Kummerfeld S.K."/>
            <person name="Kurochkin I.V."/>
            <person name="Lareau L.F."/>
            <person name="Lazarevic D."/>
            <person name="Lipovich L."/>
            <person name="Liu J."/>
            <person name="Liuni S."/>
            <person name="McWilliam S."/>
            <person name="Madan Babu M."/>
            <person name="Madera M."/>
            <person name="Marchionni L."/>
            <person name="Matsuda H."/>
            <person name="Matsuzawa S."/>
            <person name="Miki H."/>
            <person name="Mignone F."/>
            <person name="Miyake S."/>
            <person name="Morris K."/>
            <person name="Mottagui-Tabar S."/>
            <person name="Mulder N."/>
            <person name="Nakano N."/>
            <person name="Nakauchi H."/>
            <person name="Ng P."/>
            <person name="Nilsson R."/>
            <person name="Nishiguchi S."/>
            <person name="Nishikawa S."/>
            <person name="Nori F."/>
            <person name="Ohara O."/>
            <person name="Okazaki Y."/>
            <person name="Orlando V."/>
            <person name="Pang K.C."/>
            <person name="Pavan W.J."/>
            <person name="Pavesi G."/>
            <person name="Pesole G."/>
            <person name="Petrovsky N."/>
            <person name="Piazza S."/>
            <person name="Reed J."/>
            <person name="Reid J.F."/>
            <person name="Ring B.Z."/>
            <person name="Ringwald M."/>
            <person name="Rost B."/>
            <person name="Ruan Y."/>
            <person name="Salzberg S.L."/>
            <person name="Sandelin A."/>
            <person name="Schneider C."/>
            <person name="Schoenbach C."/>
            <person name="Sekiguchi K."/>
            <person name="Semple C.A."/>
            <person name="Seno S."/>
            <person name="Sessa L."/>
            <person name="Sheng Y."/>
            <person name="Shibata Y."/>
            <person name="Shimada H."/>
            <person name="Shimada K."/>
            <person name="Silva D."/>
            <person name="Sinclair B."/>
            <person name="Sperling S."/>
            <person name="Stupka E."/>
            <person name="Sugiura K."/>
            <person name="Sultana R."/>
            <person name="Takenaka Y."/>
            <person name="Taki K."/>
            <person name="Tammoja K."/>
            <person name="Tan S.L."/>
            <person name="Tang S."/>
            <person name="Taylor M.S."/>
            <person name="Tegner J."/>
            <person name="Teichmann S.A."/>
            <person name="Ueda H.R."/>
            <person name="van Nimwegen E."/>
            <person name="Verardo R."/>
            <person name="Wei C.L."/>
            <person name="Yagi K."/>
            <person name="Yamanishi H."/>
            <person name="Zabarovsky E."/>
            <person name="Zhu S."/>
            <person name="Zimmer A."/>
            <person name="Hide W."/>
            <person name="Bult C."/>
            <person name="Grimmond S.M."/>
            <person name="Teasdale R.D."/>
            <person name="Liu E.T."/>
            <person name="Brusic V."/>
            <person name="Quackenbush J."/>
            <person name="Wahlestedt C."/>
            <person name="Mattick J.S."/>
            <person name="Hume D.A."/>
            <person name="Kai C."/>
            <person name="Sasaki D."/>
            <person name="Tomaru Y."/>
            <person name="Fukuda S."/>
            <person name="Kanamori-Katayama M."/>
            <person name="Suzuki M."/>
            <person name="Aoki J."/>
            <person name="Arakawa T."/>
            <person name="Iida J."/>
            <person name="Imamura K."/>
            <person name="Itoh M."/>
            <person name="Kato T."/>
            <person name="Kawaji H."/>
            <person name="Kawagashira N."/>
            <person name="Kawashima T."/>
            <person name="Kojima M."/>
            <person name="Kondo S."/>
            <person name="Konno H."/>
            <person name="Nakano K."/>
            <person name="Ninomiya N."/>
            <person name="Nishio T."/>
            <person name="Okada M."/>
            <person name="Plessy C."/>
            <person name="Shibata K."/>
            <person name="Shiraki T."/>
            <person name="Suzuki S."/>
            <person name="Tagami M."/>
            <person name="Waki K."/>
            <person name="Watahiki A."/>
            <person name="Okamura-Oho Y."/>
            <person name="Suzuki H."/>
            <person name="Kawai J."/>
            <person name="Hayashizaki Y."/>
        </authorList>
    </citation>
    <scope>NUCLEOTIDE SEQUENCE [LARGE SCALE MRNA] (ISOFORM 1)</scope>
    <source>
        <strain>C57BL/6J</strain>
        <strain>NOD</strain>
        <tissue>Stomach</tissue>
    </source>
</reference>
<reference key="3">
    <citation type="journal article" date="2004" name="Genome Res.">
        <title>The status, quality, and expansion of the NIH full-length cDNA project: the Mammalian Gene Collection (MGC).</title>
        <authorList>
            <consortium name="The MGC Project Team"/>
        </authorList>
    </citation>
    <scope>NUCLEOTIDE SEQUENCE [LARGE SCALE MRNA] (ISOFORM 1)</scope>
    <source>
        <strain>Czech II</strain>
        <strain>FVB/N</strain>
        <tissue>Mammary tumor</tissue>
        <tissue>Olfactory epithelium</tissue>
    </source>
</reference>
<reference key="4">
    <citation type="journal article" date="2010" name="Cell">
        <title>A tissue-specific atlas of mouse protein phosphorylation and expression.</title>
        <authorList>
            <person name="Huttlin E.L."/>
            <person name="Jedrychowski M.P."/>
            <person name="Elias J.E."/>
            <person name="Goswami T."/>
            <person name="Rad R."/>
            <person name="Beausoleil S.A."/>
            <person name="Villen J."/>
            <person name="Haas W."/>
            <person name="Sowa M.E."/>
            <person name="Gygi S.P."/>
        </authorList>
    </citation>
    <scope>PHOSPHORYLATION [LARGE SCALE ANALYSIS] AT SER-386; SER-388; SER-391; SER-413 AND SER-418</scope>
    <scope>IDENTIFICATION BY MASS SPECTROMETRY [LARGE SCALE ANALYSIS]</scope>
    <source>
        <tissue>Brain</tissue>
        <tissue>Brown adipose tissue</tissue>
        <tissue>Heart</tissue>
        <tissue>Kidney</tissue>
        <tissue>Liver</tissue>
        <tissue>Lung</tissue>
        <tissue>Pancreas</tissue>
        <tissue>Spleen</tissue>
        <tissue>Testis</tissue>
    </source>
</reference>
<proteinExistence type="evidence at protein level"/>
<evidence type="ECO:0000250" key="1"/>
<evidence type="ECO:0000250" key="2">
    <source>
        <dbReference type="UniProtKB" id="Q7Z6L1"/>
    </source>
</evidence>
<evidence type="ECO:0000256" key="3">
    <source>
        <dbReference type="SAM" id="MobiDB-lite"/>
    </source>
</evidence>
<evidence type="ECO:0000303" key="4">
    <source>
    </source>
</evidence>
<evidence type="ECO:0000305" key="5"/>
<evidence type="ECO:0007744" key="6">
    <source>
    </source>
</evidence>
<comment type="function">
    <text evidence="1">Tethering factor involved in autophagy. Involved in autophagosome maturation by promoting the autophagosome fusion with lysosomes: acts by associating with both the ATG5-ATG12 conjugate and phosphatidylinositol-3-phosphate (PtdIns(3)P) present at the surface of autophagosomes. Also involved in selective autophagy against bacterial pathogens, by being required for phagophore/preautophagosomal structure biogenesis and maturation (By similarity).</text>
</comment>
<comment type="subunit">
    <text>Interacts with ATG5; the interaction is direct. Interacts with WIPI2. Interacts with the ATG5-ATG12 conjugate, the interaction is however mutually exclusive with ATG16, since it does not interact with ATG12-ATG5-ATG16 complex.</text>
</comment>
<comment type="subcellular location">
    <subcellularLocation>
        <location evidence="1">Cytoplasmic vesicle</location>
        <location evidence="1">Autophagosome membrane</location>
    </subcellularLocation>
    <subcellularLocation>
        <location evidence="1">Lysosome membrane</location>
    </subcellularLocation>
    <text evidence="1">Localizes to Lysosome membranes, and binds PtdIns(3)P at the surface of autophagosome. Localizes to autolysosomes, a vesicle formed by the fusion between autophagosomes and lysosomes (By similarity).</text>
</comment>
<comment type="alternative products">
    <event type="alternative splicing"/>
    <isoform>
        <id>Q80VP0-1</id>
        <name>1</name>
        <sequence type="displayed"/>
    </isoform>
    <isoform>
        <id>Q80VP0-2</id>
        <name>2</name>
        <sequence type="described" ref="VSP_033862"/>
    </isoform>
</comment>
<comment type="domain">
    <text evidence="1">The PH domain mediates the binding to phosphatidylinositol-3-phosphate (PtdIns(3)P).</text>
</comment>
<comment type="similarity">
    <text evidence="5">Belongs to the TECPR1 family.</text>
</comment>
<comment type="sequence caution" evidence="5">
    <conflict type="erroneous initiation">
        <sequence resource="EMBL-CDS" id="AAH25567"/>
    </conflict>
</comment>
<comment type="sequence caution" evidence="5">
    <conflict type="erroneous initiation">
        <sequence resource="EMBL-CDS" id="BAC41478"/>
    </conflict>
</comment>
<accession>Q80VP0</accession>
<accession>Q8CHA3</accession>
<accession>Q8R3E0</accession>
<accession>Q99KQ5</accession>
<accession>Q9CVC6</accession>
<sequence>MPTSVLWAVDLFGRVYTLSTAGQYWELCKDVQLEFKRVSAATQCCWGIAGDNQVYLYVCSSDVPIRHREEAYENQRWNPMGGFCEKLLPSDRWPWSDVSGLQHRPLDGVALPSPHWEWESDWYVDENFGGEPTEKGGWTYAMDFPATYTRDKKWNSCVRRRKWIRYRRYKSRDSWAKIPSKDDPKELPDPFNDLSVGGWEITEEPVGRLSVWAVSLQGKVWYREDVSHPNPEGSSWSLVETPGEVVQISCGPHDLIWATLWEGQALVREGVCRNNPKGSYWSMVEPPGSENGIMHVSAGVSVVWAITKDRKVWFRRGVNSHNPCGTSWIEMVGEMTMVNVGLNDQVWGISCEDRAVYFRQGVTPSELSGKTWKAIVVGRESDRSHSGSSSSLLSAGCFFGDEVRGSGTESAPSDTDASLEVERQGPEQPLPKEALDNSTNLKGSLSKGHETSGNTDHSTENACLTEGKEKAPETSRSDECRGPASTPAELPWTNIDLKEPKKVSNQPAAGFPETAGLSSLGLFPMGMEEPYGADDHPLWAWVSGGACAVEAGSTLKWFTIQSGLSPSVQTLSLSITPAQTAAWRKQIFQQLTERTKRELESFRHYEQAVEQSVWVKTGALQWWCDWKPHKWVDVRVALEQFTGHDGARDSILFIYYVVHEEKKYLHVFLNEVTVLVPVLNEAKHSFALYTPERTRQRWPVRLAAATEQDMNDWLALLSLSCCESRKVHGRPSPQAIWSVTCKGDIFVSEPSPDLEARERLLPCDQMFWRQMGGHLRIIEANSRGVVWGIGYDHTAWVYTGGYGGGCFQGLASSTSNIYTQSDVKSVYIYENQRWNPVTGYTSRGLPTDRFMWSDVTGLQECTKAGTKPPSLQWTWVSDWYVDFSVPGGTDQEGWQYASDFPASYHGYKTMKDFVRRRCWARKCKLVTSGPWLEVAPITLSDVSIIPESAHADGRGHNVALWAVSDKGDVLCRLGVSELNPAGSSWLHVGTDQPFASVSIGACYQVWAVARDGSAFYRGSVSPSQPAGDCWYHIPSPPKQKLTQVSVGQTSVYALDENGNLWYRAGITPSYPQGSSWEHVSNNVRKVSVGPLDQVWVIANKVQGSHGLSRGTVCRRMGVQPREPKGQGWDYGIGGGWDHISVRANATRVPRNMSRDREARGPGPVCC</sequence>